<reference key="1">
    <citation type="journal article" date="2005" name="PLoS Biol.">
        <title>The genome sequence of Rickettsia felis identifies the first putative conjugative plasmid in an obligate intracellular parasite.</title>
        <authorList>
            <person name="Ogata H."/>
            <person name="Renesto P."/>
            <person name="Audic S."/>
            <person name="Robert C."/>
            <person name="Blanc G."/>
            <person name="Fournier P.-E."/>
            <person name="Parinello H."/>
            <person name="Claverie J.-M."/>
            <person name="Raoult D."/>
        </authorList>
    </citation>
    <scope>NUCLEOTIDE SEQUENCE [LARGE SCALE GENOMIC DNA]</scope>
    <source>
        <strain>ATCC VR-1525 / URRWXCal2</strain>
    </source>
</reference>
<name>ODO1_RICFE</name>
<protein>
    <recommendedName>
        <fullName>2-oxoglutarate dehydrogenase E1 component</fullName>
        <ecNumber evidence="1">1.2.4.2</ecNumber>
    </recommendedName>
    <alternativeName>
        <fullName>Alpha-ketoglutarate dehydrogenase</fullName>
    </alternativeName>
</protein>
<organism>
    <name type="scientific">Rickettsia felis (strain ATCC VR-1525 / URRWXCal2)</name>
    <name type="common">Rickettsia azadi</name>
    <dbReference type="NCBI Taxonomy" id="315456"/>
    <lineage>
        <taxon>Bacteria</taxon>
        <taxon>Pseudomonadati</taxon>
        <taxon>Pseudomonadota</taxon>
        <taxon>Alphaproteobacteria</taxon>
        <taxon>Rickettsiales</taxon>
        <taxon>Rickettsiaceae</taxon>
        <taxon>Rickettsieae</taxon>
        <taxon>Rickettsia</taxon>
        <taxon>spotted fever group</taxon>
    </lineage>
</organism>
<evidence type="ECO:0000250" key="1">
    <source>
        <dbReference type="UniProtKB" id="P0AFG3"/>
    </source>
</evidence>
<evidence type="ECO:0000305" key="2"/>
<feature type="chain" id="PRO_0000288750" description="2-oxoglutarate dehydrogenase E1 component">
    <location>
        <begin position="1"/>
        <end position="977"/>
    </location>
</feature>
<feature type="domain" description="RPE1 insert">
    <location>
        <begin position="77"/>
        <end position="125"/>
    </location>
</feature>
<accession>Q4UKI8</accession>
<dbReference type="EC" id="1.2.4.2" evidence="1"/>
<dbReference type="EMBL" id="CP000053">
    <property type="protein sequence ID" value="AAY61943.1"/>
    <property type="status" value="ALT_INIT"/>
    <property type="molecule type" value="Genomic_DNA"/>
</dbReference>
<dbReference type="SMR" id="Q4UKI8"/>
<dbReference type="STRING" id="315456.RF_1092"/>
<dbReference type="KEGG" id="rfe:RF_1092"/>
<dbReference type="eggNOG" id="COG0567">
    <property type="taxonomic scope" value="Bacteria"/>
</dbReference>
<dbReference type="HOGENOM" id="CLU_004709_1_0_5"/>
<dbReference type="OrthoDB" id="9759785at2"/>
<dbReference type="Proteomes" id="UP000008548">
    <property type="component" value="Chromosome"/>
</dbReference>
<dbReference type="GO" id="GO:0005829">
    <property type="term" value="C:cytosol"/>
    <property type="evidence" value="ECO:0007669"/>
    <property type="project" value="TreeGrafter"/>
</dbReference>
<dbReference type="GO" id="GO:0045252">
    <property type="term" value="C:oxoglutarate dehydrogenase complex"/>
    <property type="evidence" value="ECO:0007669"/>
    <property type="project" value="TreeGrafter"/>
</dbReference>
<dbReference type="GO" id="GO:0004591">
    <property type="term" value="F:oxoglutarate dehydrogenase (succinyl-transferring) activity"/>
    <property type="evidence" value="ECO:0007669"/>
    <property type="project" value="UniProtKB-EC"/>
</dbReference>
<dbReference type="GO" id="GO:0030976">
    <property type="term" value="F:thiamine pyrophosphate binding"/>
    <property type="evidence" value="ECO:0007669"/>
    <property type="project" value="InterPro"/>
</dbReference>
<dbReference type="GO" id="GO:0006096">
    <property type="term" value="P:glycolytic process"/>
    <property type="evidence" value="ECO:0007669"/>
    <property type="project" value="UniProtKB-KW"/>
</dbReference>
<dbReference type="GO" id="GO:0006099">
    <property type="term" value="P:tricarboxylic acid cycle"/>
    <property type="evidence" value="ECO:0007669"/>
    <property type="project" value="TreeGrafter"/>
</dbReference>
<dbReference type="CDD" id="cd02016">
    <property type="entry name" value="TPP_E1_OGDC_like"/>
    <property type="match status" value="1"/>
</dbReference>
<dbReference type="FunFam" id="3.40.50.12470:FF:000009">
    <property type="entry name" value="2-oxoglutarate dehydrogenase E1 component"/>
    <property type="match status" value="1"/>
</dbReference>
<dbReference type="Gene3D" id="3.40.50.12470">
    <property type="match status" value="1"/>
</dbReference>
<dbReference type="Gene3D" id="3.40.50.970">
    <property type="match status" value="1"/>
</dbReference>
<dbReference type="Gene3D" id="3.40.50.11610">
    <property type="entry name" value="Multifunctional 2-oxoglutarate metabolism enzyme, C-terminal domain"/>
    <property type="match status" value="1"/>
</dbReference>
<dbReference type="Gene3D" id="1.10.287.1150">
    <property type="entry name" value="TPP helical domain"/>
    <property type="match status" value="1"/>
</dbReference>
<dbReference type="InterPro" id="IPR032106">
    <property type="entry name" value="2-oxogl_dehyd_N"/>
</dbReference>
<dbReference type="InterPro" id="IPR011603">
    <property type="entry name" value="2oxoglutarate_DH_E1"/>
</dbReference>
<dbReference type="InterPro" id="IPR001017">
    <property type="entry name" value="DH_E1"/>
</dbReference>
<dbReference type="InterPro" id="IPR042179">
    <property type="entry name" value="KGD_C_sf"/>
</dbReference>
<dbReference type="InterPro" id="IPR031717">
    <property type="entry name" value="ODO-1/KGD_C"/>
</dbReference>
<dbReference type="InterPro" id="IPR005728">
    <property type="entry name" value="RPE1"/>
</dbReference>
<dbReference type="InterPro" id="IPR029061">
    <property type="entry name" value="THDP-binding"/>
</dbReference>
<dbReference type="InterPro" id="IPR005475">
    <property type="entry name" value="Transketolase-like_Pyr-bd"/>
</dbReference>
<dbReference type="NCBIfam" id="TIGR00239">
    <property type="entry name" value="2oxo_dh_E1"/>
    <property type="match status" value="1"/>
</dbReference>
<dbReference type="NCBIfam" id="NF006914">
    <property type="entry name" value="PRK09404.1"/>
    <property type="match status" value="1"/>
</dbReference>
<dbReference type="NCBIfam" id="NF008907">
    <property type="entry name" value="PRK12270.1"/>
    <property type="match status" value="1"/>
</dbReference>
<dbReference type="NCBIfam" id="TIGR01045">
    <property type="entry name" value="RPE1"/>
    <property type="match status" value="1"/>
</dbReference>
<dbReference type="PANTHER" id="PTHR23152:SF4">
    <property type="entry name" value="2-OXOADIPATE DEHYDROGENASE COMPLEX COMPONENT E1"/>
    <property type="match status" value="1"/>
</dbReference>
<dbReference type="PANTHER" id="PTHR23152">
    <property type="entry name" value="2-OXOGLUTARATE DEHYDROGENASE"/>
    <property type="match status" value="1"/>
</dbReference>
<dbReference type="Pfam" id="PF16078">
    <property type="entry name" value="2-oxogl_dehyd_N"/>
    <property type="match status" value="1"/>
</dbReference>
<dbReference type="Pfam" id="PF00676">
    <property type="entry name" value="E1_dh"/>
    <property type="match status" value="1"/>
</dbReference>
<dbReference type="Pfam" id="PF16870">
    <property type="entry name" value="OxoGdeHyase_C"/>
    <property type="match status" value="1"/>
</dbReference>
<dbReference type="Pfam" id="PF02779">
    <property type="entry name" value="Transket_pyr"/>
    <property type="match status" value="1"/>
</dbReference>
<dbReference type="PIRSF" id="PIRSF000157">
    <property type="entry name" value="Oxoglu_dh_E1"/>
    <property type="match status" value="1"/>
</dbReference>
<dbReference type="SMART" id="SM00861">
    <property type="entry name" value="Transket_pyr"/>
    <property type="match status" value="1"/>
</dbReference>
<dbReference type="SUPFAM" id="SSF52518">
    <property type="entry name" value="Thiamin diphosphate-binding fold (THDP-binding)"/>
    <property type="match status" value="2"/>
</dbReference>
<sequence>MEEDLKKTGYLFGGNAVFVDELYRQYLANPASVDQTWQEFFAGIKDNSTVLNKSTAKIIIPYEIKKEPLNNNLSSEVLNNRHLAKPAYREEFKGDTERSTAAYIDIREDASTGSTSKLPLEAKFGKMSSLKAKEMINTYRKHAHYLANLDPLGLELRKTKNDLKLNIETFGLDNSQLEKNINITDEFVGNWNCKLSELVTKLDKTYTGSIGVEFEQIENVEEKNWLYNKLESEVTFSSEDKKTILNDLVEVEGFEQYLHTKFPGAKRFSVEGGDASIVAMSKAIDLSMNQGVEEIVIGMAHRGRLNTLTKVVGKPYKAVIAGFISGSVFPDELNVSGDVKYHLGYSSDRTIDNKKIHLSLADNPSHLEAVNPIVAGKVRAKQDILGDTKRSKVKAILVHGDAAFCGQGVVAESLSMSPLAAYDIGGILHFVINNQLGFTANAADTRASRYSTEFAKIIAAPILHVNGDDIEAVLKATNIAVEYRQKFGKDVVVEIICYRKYGHNEGDEPMYTQGKMYNIIKSKPTPGNIYANELVKSGIIDNNYFAKLKEEFKAKLDKEFEQAKNYKPEAHFLGGLWQGISRIRTQAAITGVGKKTLQDLGTKLCEIPKDFAVNPKLVKLFEARKATLTSDQPIDWATAEQLAFASLLSEGTNIRLTGQDCGRGTFSHRHSVLHNQIDDTTYIPLNNLSKTQAKYEVADSNLSEYAVLGFEYGYSLANPKNLVLWEAQFGDFANGAQIIFDQFISSSETKWLRMSGLVVLLPHAFEGQGPEHSSARLERFLQLAAEDNMYVTYPTTPASIFHLLRRQILDDTRKPLIIMSPKSLLRHKYAVSKLDELGENTTFLPVLDEVNKVDTNNITKVILCSGKVYYDLFEMRGNNSNIAIIRLEQLYPFEKKLVASLLKKYNRTQEFIWCQEEPKNMGAWRYIVSHLNDVLKEAGINNEFKYVGREESASPAVGSLQAHNKQQEKLLKEALGM</sequence>
<gene>
    <name type="primary">sucA</name>
    <name type="ordered locus">RF_1092</name>
</gene>
<proteinExistence type="inferred from homology"/>
<keyword id="KW-0324">Glycolysis</keyword>
<keyword id="KW-0560">Oxidoreductase</keyword>
<keyword id="KW-0786">Thiamine pyrophosphate</keyword>
<comment type="function">
    <text evidence="1">E1 component of the 2-oxoglutarate dehydrogenase (OGDH) complex which catalyzes the decarboxylation of 2-oxoglutarate, the first step in the conversion of 2-oxoglutarate to succinyl-CoA and CO(2).</text>
</comment>
<comment type="catalytic activity">
    <reaction evidence="1">
        <text>N(6)-[(R)-lipoyl]-L-lysyl-[protein] + 2-oxoglutarate + H(+) = N(6)-[(R)-S(8)-succinyldihydrolipoyl]-L-lysyl-[protein] + CO2</text>
        <dbReference type="Rhea" id="RHEA:12188"/>
        <dbReference type="Rhea" id="RHEA-COMP:10474"/>
        <dbReference type="Rhea" id="RHEA-COMP:20092"/>
        <dbReference type="ChEBI" id="CHEBI:15378"/>
        <dbReference type="ChEBI" id="CHEBI:16526"/>
        <dbReference type="ChEBI" id="CHEBI:16810"/>
        <dbReference type="ChEBI" id="CHEBI:83099"/>
        <dbReference type="ChEBI" id="CHEBI:83120"/>
        <dbReference type="EC" id="1.2.4.2"/>
    </reaction>
</comment>
<comment type="cofactor">
    <cofactor evidence="1">
        <name>thiamine diphosphate</name>
        <dbReference type="ChEBI" id="CHEBI:58937"/>
    </cofactor>
</comment>
<comment type="subunit">
    <text evidence="1">Homodimer. Part of the 2-oxoglutarate dehydrogenase (OGDH) complex composed of E1 (2-oxoglutarate dehydrogenase), E2 (dihydrolipoamide succinyltransferase) and E3 (dihydrolipoamide dehydrogenase); the complex contains multiple copies of the three enzymatic components (E1, E2 and E3).</text>
</comment>
<comment type="similarity">
    <text evidence="2">Belongs to the alpha-ketoglutarate dehydrogenase family.</text>
</comment>
<comment type="sequence caution" evidence="2">
    <conflict type="erroneous initiation">
        <sequence resource="EMBL-CDS" id="AAY61943"/>
    </conflict>
</comment>